<proteinExistence type="evidence at protein level"/>
<evidence type="ECO:0000255" key="1">
    <source>
        <dbReference type="PROSITE-ProRule" id="PRU00448"/>
    </source>
</evidence>
<name>POLC2_BRACM</name>
<dbReference type="EMBL" id="D63154">
    <property type="protein sequence ID" value="BAA09635.1"/>
    <property type="molecule type" value="mRNA"/>
</dbReference>
<dbReference type="PIR" id="S65152">
    <property type="entry name" value="S65152"/>
</dbReference>
<dbReference type="SMR" id="P69199"/>
<dbReference type="Allergome" id="172">
    <property type="allergen name" value="Bra r 7"/>
</dbReference>
<dbReference type="Proteomes" id="UP000011750">
    <property type="component" value="Unplaced"/>
</dbReference>
<dbReference type="GO" id="GO:0005737">
    <property type="term" value="C:cytoplasm"/>
    <property type="evidence" value="ECO:0000318"/>
    <property type="project" value="GO_Central"/>
</dbReference>
<dbReference type="GO" id="GO:0005509">
    <property type="term" value="F:calcium ion binding"/>
    <property type="evidence" value="ECO:0000318"/>
    <property type="project" value="GO_Central"/>
</dbReference>
<dbReference type="GO" id="GO:0030234">
    <property type="term" value="F:enzyme regulator activity"/>
    <property type="evidence" value="ECO:0000318"/>
    <property type="project" value="GO_Central"/>
</dbReference>
<dbReference type="CDD" id="cd00051">
    <property type="entry name" value="EFh"/>
    <property type="match status" value="1"/>
</dbReference>
<dbReference type="FunFam" id="1.10.238.10:FF:000198">
    <property type="entry name" value="Polcalcin Phl p 7"/>
    <property type="match status" value="1"/>
</dbReference>
<dbReference type="Gene3D" id="1.10.238.10">
    <property type="entry name" value="EF-hand"/>
    <property type="match status" value="1"/>
</dbReference>
<dbReference type="InterPro" id="IPR011992">
    <property type="entry name" value="EF-hand-dom_pair"/>
</dbReference>
<dbReference type="InterPro" id="IPR018247">
    <property type="entry name" value="EF_Hand_1_Ca_BS"/>
</dbReference>
<dbReference type="InterPro" id="IPR002048">
    <property type="entry name" value="EF_hand_dom"/>
</dbReference>
<dbReference type="InterPro" id="IPR039647">
    <property type="entry name" value="EF_hand_pair_protein_CML-like"/>
</dbReference>
<dbReference type="PANTHER" id="PTHR10891">
    <property type="entry name" value="EF-HAND CALCIUM-BINDING DOMAIN CONTAINING PROTEIN"/>
    <property type="match status" value="1"/>
</dbReference>
<dbReference type="Pfam" id="PF13499">
    <property type="entry name" value="EF-hand_7"/>
    <property type="match status" value="1"/>
</dbReference>
<dbReference type="SMART" id="SM00054">
    <property type="entry name" value="EFh"/>
    <property type="match status" value="2"/>
</dbReference>
<dbReference type="SUPFAM" id="SSF47473">
    <property type="entry name" value="EF-hand"/>
    <property type="match status" value="1"/>
</dbReference>
<dbReference type="PROSITE" id="PS00018">
    <property type="entry name" value="EF_HAND_1"/>
    <property type="match status" value="2"/>
</dbReference>
<dbReference type="PROSITE" id="PS50222">
    <property type="entry name" value="EF_HAND_2"/>
    <property type="match status" value="2"/>
</dbReference>
<organism>
    <name type="scientific">Brassica campestris</name>
    <name type="common">Field mustard</name>
    <dbReference type="NCBI Taxonomy" id="3711"/>
    <lineage>
        <taxon>Eukaryota</taxon>
        <taxon>Viridiplantae</taxon>
        <taxon>Streptophyta</taxon>
        <taxon>Embryophyta</taxon>
        <taxon>Tracheophyta</taxon>
        <taxon>Spermatophyta</taxon>
        <taxon>Magnoliopsida</taxon>
        <taxon>eudicotyledons</taxon>
        <taxon>Gunneridae</taxon>
        <taxon>Pentapetalae</taxon>
        <taxon>rosids</taxon>
        <taxon>malvids</taxon>
        <taxon>Brassicales</taxon>
        <taxon>Brassicaceae</taxon>
        <taxon>Brassiceae</taxon>
        <taxon>Brassica</taxon>
    </lineage>
</organism>
<comment type="allergen">
    <text>Causes an allergic reaction in human. Binds to IgE.</text>
</comment>
<feature type="chain" id="PRO_0000073670" description="Polcalcin Bra r 2">
    <location>
        <begin position="1"/>
        <end position="83"/>
    </location>
</feature>
<feature type="domain" description="EF-hand 1" evidence="1">
    <location>
        <begin position="5"/>
        <end position="40"/>
    </location>
</feature>
<feature type="domain" description="EF-hand 2" evidence="1">
    <location>
        <begin position="43"/>
        <end position="75"/>
    </location>
</feature>
<feature type="binding site" evidence="1">
    <location>
        <position position="18"/>
    </location>
    <ligand>
        <name>Ca(2+)</name>
        <dbReference type="ChEBI" id="CHEBI:29108"/>
        <label>1</label>
    </ligand>
</feature>
<feature type="binding site" evidence="1">
    <location>
        <position position="20"/>
    </location>
    <ligand>
        <name>Ca(2+)</name>
        <dbReference type="ChEBI" id="CHEBI:29108"/>
        <label>1</label>
    </ligand>
</feature>
<feature type="binding site" evidence="1">
    <location>
        <position position="22"/>
    </location>
    <ligand>
        <name>Ca(2+)</name>
        <dbReference type="ChEBI" id="CHEBI:29108"/>
        <label>1</label>
    </ligand>
</feature>
<feature type="binding site" evidence="1">
    <location>
        <position position="24"/>
    </location>
    <ligand>
        <name>Ca(2+)</name>
        <dbReference type="ChEBI" id="CHEBI:29108"/>
        <label>1</label>
    </ligand>
</feature>
<feature type="binding site" evidence="1">
    <location>
        <position position="29"/>
    </location>
    <ligand>
        <name>Ca(2+)</name>
        <dbReference type="ChEBI" id="CHEBI:29108"/>
        <label>1</label>
    </ligand>
</feature>
<feature type="binding site" evidence="1">
    <location>
        <position position="53"/>
    </location>
    <ligand>
        <name>Ca(2+)</name>
        <dbReference type="ChEBI" id="CHEBI:29108"/>
        <label>2</label>
    </ligand>
</feature>
<feature type="binding site" evidence="1">
    <location>
        <position position="55"/>
    </location>
    <ligand>
        <name>Ca(2+)</name>
        <dbReference type="ChEBI" id="CHEBI:29108"/>
        <label>2</label>
    </ligand>
</feature>
<feature type="binding site" evidence="1">
    <location>
        <position position="57"/>
    </location>
    <ligand>
        <name>Ca(2+)</name>
        <dbReference type="ChEBI" id="CHEBI:29108"/>
        <label>2</label>
    </ligand>
</feature>
<feature type="binding site" evidence="1">
    <location>
        <position position="59"/>
    </location>
    <ligand>
        <name>Ca(2+)</name>
        <dbReference type="ChEBI" id="CHEBI:29108"/>
        <label>2</label>
    </ligand>
</feature>
<feature type="binding site" evidence="1">
    <location>
        <position position="64"/>
    </location>
    <ligand>
        <name>Ca(2+)</name>
        <dbReference type="ChEBI" id="CHEBI:29108"/>
        <label>2</label>
    </ligand>
</feature>
<sequence length="83" mass="9136">MADATEKAEHDRIFKKFDANGDGKISASELGDALKNLGSVTHDDIKRMMAEIDTDGDGYISYQEFSDFASANRGLMKDVAKIF</sequence>
<accession>P69199</accession>
<accession>Q39406</accession>
<accession>Q43394</accession>
<reference key="1">
    <citation type="journal article" date="1995" name="Plant Mol. Biol.">
        <title>A cDNA clone encoding an IgE-binding protein from Brassica anther has significant sequence similarity to Ca(2+)-binding proteins.</title>
        <authorList>
            <person name="Toriyama K."/>
            <person name="Okada T."/>
            <person name="Watanabe M."/>
            <person name="Ide T."/>
            <person name="Ashida T."/>
            <person name="Xu H."/>
            <person name="Singh M."/>
        </authorList>
    </citation>
    <scope>NUCLEOTIDE SEQUENCE [MRNA]</scope>
    <source>
        <strain>cv. S9</strain>
        <tissue>Pollen</tissue>
    </source>
</reference>
<protein>
    <recommendedName>
        <fullName>Polcalcin Bra r 2</fullName>
    </recommendedName>
    <alternativeName>
        <fullName>Calcium-binding pollen allergen Bra r 2</fullName>
    </alternativeName>
    <allergenName>Bra r 2</allergenName>
</protein>
<keyword id="KW-0020">Allergen</keyword>
<keyword id="KW-0106">Calcium</keyword>
<keyword id="KW-0479">Metal-binding</keyword>
<keyword id="KW-1185">Reference proteome</keyword>
<keyword id="KW-0677">Repeat</keyword>